<dbReference type="EMBL" id="CP001340">
    <property type="protein sequence ID" value="ACL96827.2"/>
    <property type="molecule type" value="Genomic_DNA"/>
</dbReference>
<dbReference type="RefSeq" id="WP_010921086.1">
    <property type="nucleotide sequence ID" value="NC_011916.1"/>
</dbReference>
<dbReference type="RefSeq" id="YP_002518735.2">
    <property type="nucleotide sequence ID" value="NC_011916.1"/>
</dbReference>
<dbReference type="SMR" id="A0A0H3CCX2"/>
<dbReference type="GeneID" id="7332036"/>
<dbReference type="KEGG" id="ccs:CCNA_03362"/>
<dbReference type="PATRIC" id="fig|565050.3.peg.3276"/>
<dbReference type="HOGENOM" id="CLU_047691_10_2_5"/>
<dbReference type="OrthoDB" id="7041663at2"/>
<dbReference type="Proteomes" id="UP000001364">
    <property type="component" value="Chromosome"/>
</dbReference>
<dbReference type="GO" id="GO:0005737">
    <property type="term" value="C:cytoplasm"/>
    <property type="evidence" value="ECO:0007669"/>
    <property type="project" value="UniProtKB-SubCell"/>
</dbReference>
<dbReference type="GO" id="GO:0003677">
    <property type="term" value="F:DNA binding"/>
    <property type="evidence" value="ECO:0007669"/>
    <property type="project" value="UniProtKB-KW"/>
</dbReference>
<dbReference type="GO" id="GO:0016987">
    <property type="term" value="F:sigma factor activity"/>
    <property type="evidence" value="ECO:0007669"/>
    <property type="project" value="UniProtKB-KW"/>
</dbReference>
<dbReference type="GO" id="GO:0006352">
    <property type="term" value="P:DNA-templated transcription initiation"/>
    <property type="evidence" value="ECO:0007669"/>
    <property type="project" value="InterPro"/>
</dbReference>
<dbReference type="Gene3D" id="1.10.1740.10">
    <property type="match status" value="1"/>
</dbReference>
<dbReference type="Gene3D" id="1.10.10.10">
    <property type="entry name" value="Winged helix-like DNA-binding domain superfamily/Winged helix DNA-binding domain"/>
    <property type="match status" value="1"/>
</dbReference>
<dbReference type="InterPro" id="IPR039425">
    <property type="entry name" value="RNA_pol_sigma-70-like"/>
</dbReference>
<dbReference type="InterPro" id="IPR014284">
    <property type="entry name" value="RNA_pol_sigma-70_dom"/>
</dbReference>
<dbReference type="InterPro" id="IPR007627">
    <property type="entry name" value="RNA_pol_sigma70_r2"/>
</dbReference>
<dbReference type="InterPro" id="IPR007630">
    <property type="entry name" value="RNA_pol_sigma70_r4"/>
</dbReference>
<dbReference type="InterPro" id="IPR013325">
    <property type="entry name" value="RNA_pol_sigma_r2"/>
</dbReference>
<dbReference type="InterPro" id="IPR013324">
    <property type="entry name" value="RNA_pol_sigma_r3/r4-like"/>
</dbReference>
<dbReference type="InterPro" id="IPR036388">
    <property type="entry name" value="WH-like_DNA-bd_sf"/>
</dbReference>
<dbReference type="NCBIfam" id="NF009191">
    <property type="entry name" value="PRK12539.1"/>
    <property type="match status" value="1"/>
</dbReference>
<dbReference type="NCBIfam" id="TIGR02937">
    <property type="entry name" value="sigma70-ECF"/>
    <property type="match status" value="1"/>
</dbReference>
<dbReference type="PANTHER" id="PTHR43133:SF58">
    <property type="entry name" value="ECF RNA POLYMERASE SIGMA FACTOR SIGD"/>
    <property type="match status" value="1"/>
</dbReference>
<dbReference type="PANTHER" id="PTHR43133">
    <property type="entry name" value="RNA POLYMERASE ECF-TYPE SIGMA FACTO"/>
    <property type="match status" value="1"/>
</dbReference>
<dbReference type="Pfam" id="PF04542">
    <property type="entry name" value="Sigma70_r2"/>
    <property type="match status" value="1"/>
</dbReference>
<dbReference type="Pfam" id="PF04545">
    <property type="entry name" value="Sigma70_r4"/>
    <property type="match status" value="1"/>
</dbReference>
<dbReference type="SUPFAM" id="SSF88946">
    <property type="entry name" value="Sigma2 domain of RNA polymerase sigma factors"/>
    <property type="match status" value="1"/>
</dbReference>
<dbReference type="SUPFAM" id="SSF88659">
    <property type="entry name" value="Sigma3 and sigma4 domains of RNA polymerase sigma factors"/>
    <property type="match status" value="1"/>
</dbReference>
<comment type="function">
    <text evidence="2 5">Sigma factors are initiation factors that promote the attachment of RNA polymerase to specific initiation sites and are then released. Extracytoplasmic function (ECF) sigma factors are held in an inactive form by a cognate anti-sigma factor (NrsF in this case) until they are released (Probable). Up-regulates expression of 4 operons (sigF-nrsF, CCNA_02834, CCNA_03001 to CCNA_02999 and CCNA_03363 to CCNA_03366) in response to potassium dichromate (K(2)Cr(2)O(7)) or cadmium chloride (CdCl(2)) (PubMed:22985357). Overexpression of sigF leads to higher expression of its regulon (PubMed:22985357).</text>
</comment>
<comment type="subcellular location">
    <subcellularLocation>
        <location evidence="2">Cytoplasm</location>
    </subcellularLocation>
    <text evidence="2">Tightly associated with the inner membrane via NrsF, upon dichromate stress a small proportion is released to the cytoplasm. Mutation of 2 conserved Cys residues in anti-sigma factor NrsF leads to more SigF in the cytoplasm and greater release upon dichromate stress (PubMed:22985357).</text>
</comment>
<comment type="induction">
    <text evidence="2">Slightly induced by dichromate, partially dependent in itself for expression, does not depend on sigT or sigE. Probably part of the sigF-nrsF operon (PubMed:22985357).</text>
</comment>
<comment type="disruption phenotype">
    <text evidence="2">Not essential even when cells grown in the presence of dichromate or cadmium (CdCl(2)). Loss of dichromate and cadmium induction of the regulon's genes, including partial loss of its own expression. A double sigF-nrsF deletion is viable, whereas a single nrsF deletion (for the cognate anti-sigma factor) cannot be made.</text>
</comment>
<comment type="similarity">
    <text>Belongs to the sigma-70 factor family. ECF subfamily.</text>
</comment>
<keyword id="KW-0963">Cytoplasm</keyword>
<keyword id="KW-0238">DNA-binding</keyword>
<keyword id="KW-1185">Reference proteome</keyword>
<keyword id="KW-0731">Sigma factor</keyword>
<keyword id="KW-0346">Stress response</keyword>
<keyword id="KW-0804">Transcription</keyword>
<keyword id="KW-0805">Transcription regulation</keyword>
<gene>
    <name evidence="3" type="primary">sigF</name>
    <name type="ordered locus">CCNA_03362</name>
</gene>
<accession>A0A0H3CCX2</accession>
<name>SIGF_CAUVN</name>
<proteinExistence type="evidence at transcript level"/>
<organism>
    <name type="scientific">Caulobacter vibrioides (strain NA1000 / CB15N)</name>
    <name type="common">Caulobacter crescentus</name>
    <dbReference type="NCBI Taxonomy" id="565050"/>
    <lineage>
        <taxon>Bacteria</taxon>
        <taxon>Pseudomonadati</taxon>
        <taxon>Pseudomonadota</taxon>
        <taxon>Alphaproteobacteria</taxon>
        <taxon>Caulobacterales</taxon>
        <taxon>Caulobacteraceae</taxon>
        <taxon>Caulobacter</taxon>
    </lineage>
</organism>
<feature type="chain" id="PRO_0000440886" description="ECF RNA polymerase sigma factor SigF">
    <location>
        <begin position="1"/>
        <end position="179"/>
    </location>
</feature>
<feature type="DNA-binding region" description="H-T-H motif" evidence="1">
    <location>
        <begin position="145"/>
        <end position="164"/>
    </location>
</feature>
<feature type="region of interest" description="Sigma-70 factor domain-2" evidence="4">
    <location>
        <begin position="33"/>
        <end position="93"/>
    </location>
</feature>
<feature type="region of interest" description="Sigma-70 factor domain-4" evidence="4">
    <location>
        <begin position="123"/>
        <end position="170"/>
    </location>
</feature>
<feature type="short sequence motif" description="Polymerase core binding" evidence="1">
    <location>
        <begin position="51"/>
        <end position="64"/>
    </location>
</feature>
<sequence length="179" mass="19840">MTDTETRLKALMLRGLDGDTAAYREGLALLGVRLRAYFMRRMSGAPGDVEDLVQETLLAVHLKRSTWDSAQSFTAWAHAVARYKLIDHWRRRKIRQTLPLEDHVDFLADDAPDPGVALELDRALASLPQRQRMLVSDVKLTGLSLAEAGARAGISEGAAKVALHRALKALAERMRRADG</sequence>
<protein>
    <recommendedName>
        <fullName>ECF RNA polymerase sigma factor SigF</fullName>
        <shortName>ECF sigma factor SigF</shortName>
    </recommendedName>
</protein>
<reference key="1">
    <citation type="journal article" date="2010" name="J. Bacteriol.">
        <title>The genetic basis of laboratory adaptation in Caulobacter crescentus.</title>
        <authorList>
            <person name="Marks M.E."/>
            <person name="Castro-Rojas C.M."/>
            <person name="Teiling C."/>
            <person name="Du L."/>
            <person name="Kapatral V."/>
            <person name="Walunas T.L."/>
            <person name="Crosson S."/>
        </authorList>
    </citation>
    <scope>NUCLEOTIDE SEQUENCE [LARGE SCALE GENOMIC DNA]</scope>
    <source>
        <strain>NA1000 / CB15N</strain>
    </source>
</reference>
<reference key="2">
    <citation type="journal article" date="2012" name="BMC Microbiol.">
        <title>Extracytoplasmic function (ECF) sigma factor sigmaF is involved in Caulobacter crescentus response to heavy metal stress.</title>
        <authorList>
            <person name="Kohler C."/>
            <person name="Lourenco R.F."/>
            <person name="Avelar G.M."/>
            <person name="Gomes S.L."/>
        </authorList>
    </citation>
    <scope>FUNCTION</scope>
    <scope>REGULON</scope>
    <scope>SUBCELLULAR LOCATION</scope>
    <scope>INDUCTION</scope>
    <scope>DISRUPTION PHENOTYPE</scope>
    <source>
        <strain>NA1000 / CB15N</strain>
    </source>
</reference>
<evidence type="ECO:0000250" key="1">
    <source>
        <dbReference type="UniProtKB" id="P0AGB6"/>
    </source>
</evidence>
<evidence type="ECO:0000269" key="2">
    <source>
    </source>
</evidence>
<evidence type="ECO:0000303" key="3">
    <source>
    </source>
</evidence>
<evidence type="ECO:0000305" key="4"/>
<evidence type="ECO:0000305" key="5">
    <source>
    </source>
</evidence>